<organismHost>
    <name type="scientific">Mus musculus</name>
    <name type="common">Mouse</name>
    <dbReference type="NCBI Taxonomy" id="10090"/>
</organismHost>
<organism>
    <name type="scientific">Cas-Br-E murine leukemia virus</name>
    <dbReference type="NCBI Taxonomy" id="11792"/>
    <lineage>
        <taxon>Viruses</taxon>
        <taxon>Riboviria</taxon>
        <taxon>Pararnavirae</taxon>
        <taxon>Artverviricota</taxon>
        <taxon>Revtraviricetes</taxon>
        <taxon>Ortervirales</taxon>
        <taxon>Retroviridae</taxon>
        <taxon>Orthoretrovirinae</taxon>
        <taxon>Gammaretrovirus</taxon>
        <taxon>Murine leukemia virus</taxon>
    </lineage>
</organism>
<keyword id="KW-0165">Cleavage on pair of basic residues</keyword>
<keyword id="KW-0175">Coiled coil</keyword>
<keyword id="KW-1015">Disulfide bond</keyword>
<keyword id="KW-1169">Fusion of virus membrane with host cell membrane</keyword>
<keyword id="KW-1168">Fusion of virus membrane with host membrane</keyword>
<keyword id="KW-0325">Glycoprotein</keyword>
<keyword id="KW-1032">Host cell membrane</keyword>
<keyword id="KW-1043">Host membrane</keyword>
<keyword id="KW-0945">Host-virus interaction</keyword>
<keyword id="KW-0449">Lipoprotein</keyword>
<keyword id="KW-0472">Membrane</keyword>
<keyword id="KW-0479">Metal-binding</keyword>
<keyword id="KW-0564">Palmitate</keyword>
<keyword id="KW-0732">Signal</keyword>
<keyword id="KW-0812">Transmembrane</keyword>
<keyword id="KW-1133">Transmembrane helix</keyword>
<keyword id="KW-1161">Viral attachment to host cell</keyword>
<keyword id="KW-0261">Viral envelope protein</keyword>
<keyword id="KW-1162">Viral penetration into host cytoplasm</keyword>
<keyword id="KW-0946">Virion</keyword>
<keyword id="KW-1160">Virus entry into host cell</keyword>
<keyword id="KW-0862">Zinc</keyword>
<sequence>MEGPAFSKSPKDKTIERAFLGVLGILFVTGGLASRDNPHQVYNITWEVTNGEQDTVWAVTGNHPLWTWWPDLTPDLCMLALHGPTHWGLDNHPPYSSPPGPPCCSGDAGAVSGCARDCDEPLTSYSPRCNTAWNRLKLARVTHAPKEGFYICPGSHRPRWARSCGGLDAYYCASWGCETTGRAAWNPTSSWDYITVSNNLTSSQATKACKNNGWCNPLVIRFTGPGKRATSWTTGHFWGLRLYISGHDPGLTFGIRLKVTDLGPRVPIGPNPVLSDQRPPSRPVPARPPPPSASPSTPTIPPQQGTGDRLLNLVQGAYLTLNMTDPTRTQECWLCLVSEPPYYEGVAVLREYTSHETAPANCSSGSQHKLTLSEVTGQGRCLGTVPKTHQALCNRTEPTVSGSNYLVAPEGTLWACSTGLTPCLSTTVLNLTTDYCVLVELWPKVTYHSPDYVYTQFEPGARFRREPVSLTLALLPEGLTMGGIAAGVGTGTTALVATQQFQQLQAAMHNDLKEVEKSITNLEKSLTSLSEVVLQNRRGLDLLFLKEGGLCAALKEECCFYADHTGLVRDSMAKLRERLNQRQKLFESGQGWFEGLFNRSPWFTTLISTIMGPLIVLLLILLFGPCILNRLVQFVKDRISVVQALVLTQQYHQLKPIEYEP</sequence>
<accession>P08360</accession>
<protein>
    <recommendedName>
        <fullName>Envelope glycoprotein</fullName>
    </recommendedName>
    <alternativeName>
        <fullName>Env polyprotein</fullName>
    </alternativeName>
    <component>
        <recommendedName>
            <fullName>Surface protein</fullName>
            <shortName>SU</shortName>
        </recommendedName>
        <alternativeName>
            <fullName>Glycoprotein 70</fullName>
            <shortName>gp70</shortName>
        </alternativeName>
    </component>
    <component>
        <recommendedName>
            <fullName>Transmembrane protein</fullName>
            <shortName>TM</shortName>
        </recommendedName>
        <alternativeName>
            <fullName>Envelope protein p15E</fullName>
        </alternativeName>
    </component>
    <component>
        <recommendedName>
            <fullName>R-peptide</fullName>
        </recommendedName>
        <alternativeName>
            <fullName>p2E</fullName>
        </alternativeName>
    </component>
</protein>
<gene>
    <name type="primary">env</name>
</gene>
<dbReference type="EMBL" id="M14702">
    <property type="protein sequence ID" value="AAA46512.1"/>
    <property type="molecule type" value="Genomic_DNA"/>
</dbReference>
<dbReference type="EMBL" id="X57540">
    <property type="status" value="NOT_ANNOTATED_CDS"/>
    <property type="molecule type" value="Genomic_DNA"/>
</dbReference>
<dbReference type="PIR" id="B26103">
    <property type="entry name" value="VCMVCB"/>
</dbReference>
<dbReference type="SMR" id="P08360"/>
<dbReference type="GlyCosmos" id="P08360">
    <property type="glycosylation" value="6 sites, No reported glycans"/>
</dbReference>
<dbReference type="GO" id="GO:0020002">
    <property type="term" value="C:host cell plasma membrane"/>
    <property type="evidence" value="ECO:0007669"/>
    <property type="project" value="UniProtKB-SubCell"/>
</dbReference>
<dbReference type="GO" id="GO:0016020">
    <property type="term" value="C:membrane"/>
    <property type="evidence" value="ECO:0007669"/>
    <property type="project" value="UniProtKB-KW"/>
</dbReference>
<dbReference type="GO" id="GO:0019031">
    <property type="term" value="C:viral envelope"/>
    <property type="evidence" value="ECO:0007669"/>
    <property type="project" value="UniProtKB-KW"/>
</dbReference>
<dbReference type="GO" id="GO:0055036">
    <property type="term" value="C:virion membrane"/>
    <property type="evidence" value="ECO:0007669"/>
    <property type="project" value="UniProtKB-SubCell"/>
</dbReference>
<dbReference type="GO" id="GO:0046872">
    <property type="term" value="F:metal ion binding"/>
    <property type="evidence" value="ECO:0007669"/>
    <property type="project" value="UniProtKB-KW"/>
</dbReference>
<dbReference type="GO" id="GO:0019064">
    <property type="term" value="P:fusion of virus membrane with host plasma membrane"/>
    <property type="evidence" value="ECO:0007669"/>
    <property type="project" value="UniProtKB-KW"/>
</dbReference>
<dbReference type="GO" id="GO:0046718">
    <property type="term" value="P:symbiont entry into host cell"/>
    <property type="evidence" value="ECO:0007669"/>
    <property type="project" value="UniProtKB-KW"/>
</dbReference>
<dbReference type="GO" id="GO:0019062">
    <property type="term" value="P:virion attachment to host cell"/>
    <property type="evidence" value="ECO:0007669"/>
    <property type="project" value="UniProtKB-KW"/>
</dbReference>
<dbReference type="CDD" id="cd09851">
    <property type="entry name" value="HTLV-1-like_HR1-HR2"/>
    <property type="match status" value="1"/>
</dbReference>
<dbReference type="FunFam" id="1.10.287.210:FF:000005">
    <property type="entry name" value="Envelope glycoprotein"/>
    <property type="match status" value="1"/>
</dbReference>
<dbReference type="Gene3D" id="1.10.287.210">
    <property type="match status" value="1"/>
</dbReference>
<dbReference type="Gene3D" id="3.90.310.10">
    <property type="entry name" value="ENV polyprotein, receptor-binding domain"/>
    <property type="match status" value="1"/>
</dbReference>
<dbReference type="InterPro" id="IPR008981">
    <property type="entry name" value="FMuLV_rcpt-bd"/>
</dbReference>
<dbReference type="InterPro" id="IPR018154">
    <property type="entry name" value="TLV/ENV_coat_polyprotein"/>
</dbReference>
<dbReference type="PANTHER" id="PTHR10424:SF72">
    <property type="entry name" value="BC035947 PROTEIN-RELATED"/>
    <property type="match status" value="1"/>
</dbReference>
<dbReference type="PANTHER" id="PTHR10424">
    <property type="entry name" value="VIRAL ENVELOPE PROTEIN"/>
    <property type="match status" value="1"/>
</dbReference>
<dbReference type="Pfam" id="PF00429">
    <property type="entry name" value="TLV_coat"/>
    <property type="match status" value="1"/>
</dbReference>
<dbReference type="SUPFAM" id="SSF49830">
    <property type="entry name" value="ENV polyprotein, receptor-binding domain"/>
    <property type="match status" value="1"/>
</dbReference>
<dbReference type="SUPFAM" id="SSF58069">
    <property type="entry name" value="Virus ectodomain"/>
    <property type="match status" value="1"/>
</dbReference>
<name>ENV_MLVCB</name>
<feature type="signal peptide" evidence="2">
    <location>
        <begin position="1"/>
        <end position="33"/>
    </location>
</feature>
<feature type="chain" id="PRO_0000239580" description="Envelope glycoprotein">
    <location>
        <begin position="34"/>
        <end position="661"/>
    </location>
</feature>
<feature type="chain" id="PRO_0000040748" description="Surface protein" evidence="1">
    <location>
        <begin position="34"/>
        <end position="465"/>
    </location>
</feature>
<feature type="chain" id="PRO_0000040749" description="Transmembrane protein" evidence="1">
    <location>
        <begin position="466"/>
        <end position="645"/>
    </location>
</feature>
<feature type="peptide" id="PRO_0000040750" description="R-peptide">
    <location>
        <begin position="646"/>
        <end position="661"/>
    </location>
</feature>
<feature type="topological domain" description="Extracellular" evidence="2">
    <location>
        <begin position="34"/>
        <end position="606"/>
    </location>
</feature>
<feature type="transmembrane region" description="Helical" evidence="2">
    <location>
        <begin position="607"/>
        <end position="627"/>
    </location>
</feature>
<feature type="topological domain" description="Cytoplasmic" evidence="2">
    <location>
        <begin position="628"/>
        <end position="661"/>
    </location>
</feature>
<feature type="region of interest" description="Receptor-binding domain (RBD)" evidence="2">
    <location>
        <begin position="32"/>
        <end position="267"/>
    </location>
</feature>
<feature type="region of interest" description="Disordered" evidence="3">
    <location>
        <begin position="268"/>
        <end position="308"/>
    </location>
</feature>
<feature type="region of interest" description="Fusion peptide" evidence="1">
    <location>
        <begin position="468"/>
        <end position="488"/>
    </location>
</feature>
<feature type="region of interest" description="Immunosuppression" evidence="1">
    <location>
        <begin position="534"/>
        <end position="550"/>
    </location>
</feature>
<feature type="coiled-coil region" evidence="2">
    <location>
        <begin position="497"/>
        <end position="533"/>
    </location>
</feature>
<feature type="short sequence motif" description="CXXC">
    <location>
        <begin position="332"/>
        <end position="335"/>
    </location>
</feature>
<feature type="short sequence motif" description="CX6CC">
    <location>
        <begin position="551"/>
        <end position="559"/>
    </location>
</feature>
<feature type="short sequence motif" description="YXXL motif; contains endocytosis signal" evidence="1">
    <location>
        <begin position="651"/>
        <end position="654"/>
    </location>
</feature>
<feature type="compositionally biased region" description="Pro residues" evidence="3">
    <location>
        <begin position="280"/>
        <end position="301"/>
    </location>
</feature>
<feature type="binding site" evidence="1">
    <location>
        <position position="86"/>
    </location>
    <ligand>
        <name>Zn(2+)</name>
        <dbReference type="ChEBI" id="CHEBI:29105"/>
    </ligand>
</feature>
<feature type="binding site" evidence="1">
    <location>
        <position position="117"/>
    </location>
    <ligand>
        <name>Zn(2+)</name>
        <dbReference type="ChEBI" id="CHEBI:29105"/>
    </ligand>
</feature>
<feature type="site" description="Cleavage; by host" evidence="1">
    <location>
        <begin position="465"/>
        <end position="466"/>
    </location>
</feature>
<feature type="site" description="Cleavage; by viral protease p14">
    <location>
        <begin position="645"/>
        <end position="646"/>
    </location>
</feature>
<feature type="lipid moiety-binding region" description="S-palmitoyl cysteine; by host" evidence="1">
    <location>
        <position position="626"/>
    </location>
</feature>
<feature type="glycosylation site" description="N-linked (GlcNAc...) asparagine; by host" evidence="1">
    <location>
        <position position="43"/>
    </location>
</feature>
<feature type="glycosylation site" description="N-linked (GlcNAc...) asparagine; by host" evidence="1">
    <location>
        <position position="199"/>
    </location>
</feature>
<feature type="glycosylation site" description="N-linked (GlcNAc...) asparagine; by host" evidence="1">
    <location>
        <position position="322"/>
    </location>
</feature>
<feature type="glycosylation site" description="N-linked (GlcNAc...) asparagine; by host" evidence="2">
    <location>
        <position position="361"/>
    </location>
</feature>
<feature type="glycosylation site" description="N-linked (GlcNAc...) asparagine; by host" evidence="2">
    <location>
        <position position="394"/>
    </location>
</feature>
<feature type="glycosylation site" description="N-linked (GlcNAc...) asparagine; by host" evidence="2">
    <location>
        <position position="430"/>
    </location>
</feature>
<feature type="disulfide bond" evidence="1">
    <location>
        <begin position="77"/>
        <end position="129"/>
    </location>
</feature>
<feature type="disulfide bond" evidence="1">
    <location>
        <begin position="103"/>
        <end position="118"/>
    </location>
</feature>
<feature type="disulfide bond" evidence="1">
    <location>
        <begin position="104"/>
        <end position="114"/>
    </location>
</feature>
<feature type="disulfide bond" evidence="1">
    <location>
        <begin position="152"/>
        <end position="172"/>
    </location>
</feature>
<feature type="disulfide bond" evidence="1">
    <location>
        <begin position="164"/>
        <end position="177"/>
    </location>
</feature>
<feature type="disulfide bond" evidence="1">
    <location>
        <begin position="209"/>
        <end position="215"/>
    </location>
</feature>
<feature type="disulfide bond" description="Interchain (between SU and TM chains, or C-335 with C-559); in linked form">
    <location>
        <begin position="332"/>
        <end position="559"/>
    </location>
</feature>
<feature type="disulfide bond">
    <location>
        <begin position="332"/>
        <end position="335"/>
    </location>
</feature>
<feature type="disulfide bond" evidence="1">
    <location>
        <begin position="362"/>
        <end position="416"/>
    </location>
</feature>
<feature type="disulfide bond" evidence="1">
    <location>
        <begin position="381"/>
        <end position="393"/>
    </location>
</feature>
<feature type="disulfide bond" evidence="1">
    <location>
        <begin position="423"/>
        <end position="436"/>
    </location>
</feature>
<feature type="disulfide bond" evidence="1">
    <location>
        <begin position="551"/>
        <end position="558"/>
    </location>
</feature>
<feature type="sequence conflict" description="In Ref. 2." evidence="4" ref="2">
    <original>PE</original>
    <variation>LG</variation>
    <location>
        <begin position="476"/>
        <end position="477"/>
    </location>
</feature>
<comment type="function">
    <text evidence="1">The surface protein (SU) attaches the virus to the host cell by binding to its receptor. This interaction triggers the refolding of the transmembrane protein (TM) and is thought to activate its fusogenic potential by unmasking its fusion peptide. Fusion occurs at the host cell plasma membrane (By similarity).</text>
</comment>
<comment type="function">
    <text evidence="1">The transmembrane protein (TM) acts as a class I viral fusion protein. Under the current model, the protein has at least 3 conformational states: pre-fusion native state, pre-hairpin intermediate state, and post-fusion hairpin state. During viral and target cell membrane fusion, the coiled coil regions (heptad repeats) assume a trimer-of-hairpins structure, positioning the fusion peptide in close proximity to the C-terminal region of the ectodomain. The formation of this structure appears to drive apposition and subsequent fusion of viral and target cell membranes. Membranes fusion leads to delivery of the nucleocapsid into the cytoplasm (By similarity).</text>
</comment>
<comment type="subunit">
    <text evidence="1">The mature envelope protein (Env) consists of a trimer of SU-TM heterodimers attached by a labile interchain disulfide bond.</text>
</comment>
<comment type="subcellular location">
    <molecule>Transmembrane protein</molecule>
    <subcellularLocation>
        <location evidence="1">Virion membrane</location>
        <topology evidence="1">Single-pass type I membrane protein</topology>
    </subcellularLocation>
    <subcellularLocation>
        <location evidence="1">Host cell membrane</location>
        <topology evidence="1">Single-pass type I membrane protein</topology>
    </subcellularLocation>
</comment>
<comment type="subcellular location">
    <molecule>Surface protein</molecule>
    <subcellularLocation>
        <location>Virion membrane</location>
        <topology>Peripheral membrane protein</topology>
    </subcellularLocation>
    <subcellularLocation>
        <location evidence="1">Host cell membrane</location>
        <topology evidence="1">Peripheral membrane protein</topology>
    </subcellularLocation>
    <text evidence="1">The surface protein is not anchored to the viral envelope, but associates with the virion surface through its binding to TM. Both proteins are thought to be concentrated at the site of budding and incorporated into the virions possibly by contacts between the cytoplasmic tail of Env and the N-terminus of Gag (By similarity).</text>
</comment>
<comment type="subcellular location">
    <molecule>R-peptide</molecule>
    <subcellularLocation>
        <location evidence="1">Host cell membrane</location>
        <topology evidence="1">Peripheral membrane protein</topology>
    </subcellularLocation>
    <text evidence="1">The R-peptide is membrane-associated through its palmitate.</text>
</comment>
<comment type="domain">
    <text>The YXXL motif is involved in determining the exact site of viral release at the surface of infected mononuclear cells and promotes endocytosis.</text>
</comment>
<comment type="domain">
    <text evidence="1">The 17 amino acids long immunosuppressive region is present in many retroviral envelope proteins. Synthetic peptides derived from this relatively conserved sequence inhibit immune function in vitro and in vivo (By similarity).</text>
</comment>
<comment type="PTM">
    <text evidence="1">Specific enzymatic cleavages in vivo yield mature proteins. Envelope glycoproteins are synthesized as an inactive precursor that is N-glycosylated and processed likely by host cell furin or by a furin-like protease in the Golgi to yield the mature SU and TM proteins. The cleavage site between SU and TM requires the minimal sequence [KR]-X-[KR]-R. The R-peptide is released from the C-terminus of the cytoplasmic tail of the TM protein upon particle formation as a result of proteolytic cleavage by the viral protease. Cleavage of this peptide is required for TM to become fusogenic (By similarity).</text>
</comment>
<comment type="PTM">
    <text evidence="1">The CXXC motif is highly conserved across a broad range of retroviral envelope proteins. It is thought to participate in the formation of a labile disulfide bond possibly with the CX6CC motif present in the transmembrane protein. Isomerization of the intersubunit disulfide bond to an SU intrachain disulfide bond is thought to occur upon receptor recognition in order to allow membrane fusion (By similarity).</text>
</comment>
<comment type="PTM">
    <text evidence="1">The transmembrane protein is palmitoylated.</text>
</comment>
<comment type="PTM">
    <text evidence="1">The R-peptide is palmitoylated.</text>
</comment>
<evidence type="ECO:0000250" key="1"/>
<evidence type="ECO:0000255" key="2"/>
<evidence type="ECO:0000256" key="3">
    <source>
        <dbReference type="SAM" id="MobiDB-lite"/>
    </source>
</evidence>
<evidence type="ECO:0000305" key="4"/>
<proteinExistence type="evidence at protein level"/>
<reference key="1">
    <citation type="journal article" date="1986" name="J. Virol.">
        <title>Cas-Br-E murine leukemia virus: sequencing of the paralytogenic region of its genome and derivation of specific probes to study its origin and the structure of its recombinant genomes in leukemic tissues.</title>
        <authorList>
            <person name="Rassart E."/>
            <person name="Nelbach L."/>
            <person name="Jolicoeur P."/>
        </authorList>
    </citation>
    <scope>NUCLEOTIDE SEQUENCE [GENOMIC DNA]</scope>
</reference>
<reference key="2">
    <citation type="journal article" date="1991" name="Nucleic Acids Res.">
        <title>Complete nucleotide sequence of the neurotropic murine retrovirus CAS-BR-E.</title>
        <authorList>
            <person name="Perryman S.M."/>
            <person name="McAtee F.J."/>
            <person name="Portis J.L."/>
        </authorList>
    </citation>
    <scope>NUCLEOTIDE SEQUENCE [GENOMIC DNA]</scope>
</reference>
<reference key="3">
    <citation type="journal article" date="2002" name="J. Gen. Virol.">
        <title>Identification of R-peptides in envelope proteins of C-type retroviruses.</title>
        <authorList>
            <person name="Bobkova M."/>
            <person name="Stitz J."/>
            <person name="Engelstadter M."/>
            <person name="Cichutek K."/>
            <person name="Buchholz C.J."/>
        </authorList>
    </citation>
    <scope>CLEAVAGE OF R-PEPTIDE</scope>
</reference>